<feature type="chain" id="PRO_0000412038" description="CASP-like protein 1E1">
    <location>
        <begin position="1"/>
        <end position="193"/>
    </location>
</feature>
<feature type="topological domain" description="Cytoplasmic" evidence="2">
    <location>
        <begin position="1"/>
        <end position="30"/>
    </location>
</feature>
<feature type="transmembrane region" description="Helical" evidence="2">
    <location>
        <begin position="31"/>
        <end position="51"/>
    </location>
</feature>
<feature type="topological domain" description="Extracellular" evidence="2">
    <location>
        <begin position="52"/>
        <end position="86"/>
    </location>
</feature>
<feature type="transmembrane region" description="Helical" evidence="2">
    <location>
        <begin position="87"/>
        <end position="107"/>
    </location>
</feature>
<feature type="topological domain" description="Cytoplasmic" evidence="2">
    <location>
        <begin position="108"/>
        <end position="113"/>
    </location>
</feature>
<feature type="transmembrane region" description="Helical" evidence="2">
    <location>
        <begin position="114"/>
        <end position="134"/>
    </location>
</feature>
<feature type="topological domain" description="Extracellular" evidence="2">
    <location>
        <begin position="135"/>
        <end position="162"/>
    </location>
</feature>
<feature type="transmembrane region" description="Helical" evidence="2">
    <location>
        <begin position="163"/>
        <end position="183"/>
    </location>
</feature>
<feature type="topological domain" description="Cytoplasmic" evidence="2">
    <location>
        <begin position="184"/>
        <end position="193"/>
    </location>
</feature>
<gene>
    <name type="ORF">POPTRDRAFT_820934</name>
</gene>
<keyword id="KW-1003">Cell membrane</keyword>
<keyword id="KW-0472">Membrane</keyword>
<keyword id="KW-1185">Reference proteome</keyword>
<keyword id="KW-0812">Transmembrane</keyword>
<keyword id="KW-1133">Transmembrane helix</keyword>
<comment type="subunit">
    <text evidence="1">Homodimer and heterodimers.</text>
</comment>
<comment type="subcellular location">
    <subcellularLocation>
        <location evidence="1">Cell membrane</location>
        <topology evidence="1">Multi-pass membrane protein</topology>
    </subcellularLocation>
</comment>
<comment type="similarity">
    <text evidence="3">Belongs to the Casparian strip membrane proteins (CASP) family.</text>
</comment>
<proteinExistence type="inferred from homology"/>
<name>CSPL7_POPTR</name>
<reference key="1">
    <citation type="journal article" date="2006" name="Science">
        <title>The genome of black cottonwood, Populus trichocarpa (Torr. &amp; Gray).</title>
        <authorList>
            <person name="Tuskan G.A."/>
            <person name="Difazio S."/>
            <person name="Jansson S."/>
            <person name="Bohlmann J."/>
            <person name="Grigoriev I."/>
            <person name="Hellsten U."/>
            <person name="Putnam N."/>
            <person name="Ralph S."/>
            <person name="Rombauts S."/>
            <person name="Salamov A."/>
            <person name="Schein J."/>
            <person name="Sterck L."/>
            <person name="Aerts A."/>
            <person name="Bhalerao R.R."/>
            <person name="Bhalerao R.P."/>
            <person name="Blaudez D."/>
            <person name="Boerjan W."/>
            <person name="Brun A."/>
            <person name="Brunner A."/>
            <person name="Busov V."/>
            <person name="Campbell M."/>
            <person name="Carlson J."/>
            <person name="Chalot M."/>
            <person name="Chapman J."/>
            <person name="Chen G.-L."/>
            <person name="Cooper D."/>
            <person name="Coutinho P.M."/>
            <person name="Couturier J."/>
            <person name="Covert S."/>
            <person name="Cronk Q."/>
            <person name="Cunningham R."/>
            <person name="Davis J."/>
            <person name="Degroeve S."/>
            <person name="Dejardin A."/>
            <person name="dePamphilis C.W."/>
            <person name="Detter J."/>
            <person name="Dirks B."/>
            <person name="Dubchak I."/>
            <person name="Duplessis S."/>
            <person name="Ehlting J."/>
            <person name="Ellis B."/>
            <person name="Gendler K."/>
            <person name="Goodstein D."/>
            <person name="Gribskov M."/>
            <person name="Grimwood J."/>
            <person name="Groover A."/>
            <person name="Gunter L."/>
            <person name="Hamberger B."/>
            <person name="Heinze B."/>
            <person name="Helariutta Y."/>
            <person name="Henrissat B."/>
            <person name="Holligan D."/>
            <person name="Holt R."/>
            <person name="Huang W."/>
            <person name="Islam-Faridi N."/>
            <person name="Jones S."/>
            <person name="Jones-Rhoades M."/>
            <person name="Jorgensen R."/>
            <person name="Joshi C."/>
            <person name="Kangasjaervi J."/>
            <person name="Karlsson J."/>
            <person name="Kelleher C."/>
            <person name="Kirkpatrick R."/>
            <person name="Kirst M."/>
            <person name="Kohler A."/>
            <person name="Kalluri U."/>
            <person name="Larimer F."/>
            <person name="Leebens-Mack J."/>
            <person name="Leple J.-C."/>
            <person name="Locascio P."/>
            <person name="Lou Y."/>
            <person name="Lucas S."/>
            <person name="Martin F."/>
            <person name="Montanini B."/>
            <person name="Napoli C."/>
            <person name="Nelson D.R."/>
            <person name="Nelson C."/>
            <person name="Nieminen K."/>
            <person name="Nilsson O."/>
            <person name="Pereda V."/>
            <person name="Peter G."/>
            <person name="Philippe R."/>
            <person name="Pilate G."/>
            <person name="Poliakov A."/>
            <person name="Razumovskaya J."/>
            <person name="Richardson P."/>
            <person name="Rinaldi C."/>
            <person name="Ritland K."/>
            <person name="Rouze P."/>
            <person name="Ryaboy D."/>
            <person name="Schmutz J."/>
            <person name="Schrader J."/>
            <person name="Segerman B."/>
            <person name="Shin H."/>
            <person name="Siddiqui A."/>
            <person name="Sterky F."/>
            <person name="Terry A."/>
            <person name="Tsai C.-J."/>
            <person name="Uberbacher E."/>
            <person name="Unneberg P."/>
            <person name="Vahala J."/>
            <person name="Wall K."/>
            <person name="Wessler S."/>
            <person name="Yang G."/>
            <person name="Yin T."/>
            <person name="Douglas C."/>
            <person name="Marra M."/>
            <person name="Sandberg G."/>
            <person name="Van de Peer Y."/>
            <person name="Rokhsar D.S."/>
        </authorList>
    </citation>
    <scope>NUCLEOTIDE SEQUENCE [LARGE SCALE GENOMIC DNA]</scope>
    <source>
        <strain>cv. Nisqually</strain>
    </source>
</reference>
<reference key="2">
    <citation type="submission" date="2008-12" db="EMBL/GenBank/DDBJ databases">
        <authorList>
            <consortium name="US DOE Joint Genome Institute (JGI-PGF)"/>
            <person name="Grigoriev I.V."/>
            <person name="Terry A."/>
            <person name="Salamov A.A."/>
            <person name="Otillar R."/>
            <person name="Lou Y."/>
            <person name="Lucas S."/>
            <person name="Hammon N."/>
            <person name="Glavina del Rio T."/>
            <person name="Detter J."/>
            <person name="Kalin E."/>
            <person name="Tice H."/>
            <person name="Pitluck S."/>
            <person name="Chapman J."/>
            <person name="Putnam N.H."/>
            <person name="Brunner A."/>
            <person name="Busov V."/>
            <person name="Campbell M."/>
            <person name="Chalot M."/>
            <person name="Covert S."/>
            <person name="Davis J."/>
            <person name="DiFazio S."/>
            <person name="Gribskov M."/>
            <person name="Gunter L."/>
            <person name="Hamberger B."/>
            <person name="Jansson S."/>
            <person name="Joshi C."/>
            <person name="Larimer F."/>
            <person name="Martin F."/>
            <person name="Napoli C."/>
            <person name="Nelson D."/>
            <person name="Ralph S."/>
            <person name="Rombauts S."/>
            <person name="Rouze P."/>
            <person name="Schrader J."/>
            <person name="Tsai C."/>
            <person name="Vahala J."/>
            <person name="Tuskan G."/>
            <person name="Rokhsar D."/>
        </authorList>
    </citation>
    <scope>GENOME REANNOTATION</scope>
    <source>
        <strain>cv. Nisqually</strain>
    </source>
</reference>
<reference key="3">
    <citation type="journal article" date="2014" name="Plant Physiol.">
        <title>Functional and evolutionary analysis of the CASPARIAN STRIP MEMBRANE DOMAIN PROTEIN family.</title>
        <authorList>
            <person name="Roppolo D."/>
            <person name="Boeckmann B."/>
            <person name="Pfister A."/>
            <person name="Boutet E."/>
            <person name="Rubio M.C."/>
            <person name="Denervaud-Tendon V."/>
            <person name="Vermeer J.E."/>
            <person name="Gheyselinck J."/>
            <person name="Xenarios I."/>
            <person name="Geldner N."/>
        </authorList>
    </citation>
    <scope>GENE FAMILY</scope>
    <scope>NOMENCLATURE</scope>
</reference>
<organism>
    <name type="scientific">Populus trichocarpa</name>
    <name type="common">Western balsam poplar</name>
    <name type="synonym">Populus balsamifera subsp. trichocarpa</name>
    <dbReference type="NCBI Taxonomy" id="3694"/>
    <lineage>
        <taxon>Eukaryota</taxon>
        <taxon>Viridiplantae</taxon>
        <taxon>Streptophyta</taxon>
        <taxon>Embryophyta</taxon>
        <taxon>Tracheophyta</taxon>
        <taxon>Spermatophyta</taxon>
        <taxon>Magnoliopsida</taxon>
        <taxon>eudicotyledons</taxon>
        <taxon>Gunneridae</taxon>
        <taxon>Pentapetalae</taxon>
        <taxon>rosids</taxon>
        <taxon>fabids</taxon>
        <taxon>Malpighiales</taxon>
        <taxon>Salicaceae</taxon>
        <taxon>Saliceae</taxon>
        <taxon>Populus</taxon>
    </lineage>
</organism>
<protein>
    <recommendedName>
        <fullName>CASP-like protein 1E1</fullName>
        <shortName>PtCASPL1E1</shortName>
    </recommendedName>
</protein>
<sequence length="193" mass="20498">MESQNKASLPVMDGLERRVVASQSEGASTCDLLLRVLALVLTLAAAIVLGVDKQTKVVPIKIVDTLPAINLPVSAKWHYLSAFTYSVASNAIACSYAALSLVLAVSGKKGIMSIVIVLDLLMVAMLFSSNGAALAIGLMGYQGNSHVRWTKVCHVFGRFCNQVAVSISLSLLGSILFLLLVGITSLRLHKKSK</sequence>
<evidence type="ECO:0000250" key="1"/>
<evidence type="ECO:0000255" key="2"/>
<evidence type="ECO:0000305" key="3"/>
<dbReference type="EMBL" id="CM009297">
    <property type="protein sequence ID" value="EEE89212.2"/>
    <property type="molecule type" value="Genomic_DNA"/>
</dbReference>
<dbReference type="RefSeq" id="XP_002311845.2">
    <property type="nucleotide sequence ID" value="XM_002311809.2"/>
</dbReference>
<dbReference type="SMR" id="B9HMP6"/>
<dbReference type="FunCoup" id="B9HMP6">
    <property type="interactions" value="483"/>
</dbReference>
<dbReference type="STRING" id="3694.B9HMP6"/>
<dbReference type="KEGG" id="pop:7481641"/>
<dbReference type="eggNOG" id="ENOG502RZNK">
    <property type="taxonomic scope" value="Eukaryota"/>
</dbReference>
<dbReference type="HOGENOM" id="CLU_066104_1_0_1"/>
<dbReference type="InParanoid" id="B9HMP6"/>
<dbReference type="OrthoDB" id="1898688at2759"/>
<dbReference type="Proteomes" id="UP000006729">
    <property type="component" value="Chromosome 8"/>
</dbReference>
<dbReference type="ExpressionAtlas" id="B9HMP6">
    <property type="expression patterns" value="baseline"/>
</dbReference>
<dbReference type="GO" id="GO:0005886">
    <property type="term" value="C:plasma membrane"/>
    <property type="evidence" value="ECO:0000318"/>
    <property type="project" value="GO_Central"/>
</dbReference>
<dbReference type="InterPro" id="IPR006459">
    <property type="entry name" value="CASP/CASPL"/>
</dbReference>
<dbReference type="InterPro" id="IPR006702">
    <property type="entry name" value="CASP_dom"/>
</dbReference>
<dbReference type="InterPro" id="IPR044173">
    <property type="entry name" value="CASPL"/>
</dbReference>
<dbReference type="NCBIfam" id="TIGR01569">
    <property type="entry name" value="A_tha_TIGR01569"/>
    <property type="match status" value="1"/>
</dbReference>
<dbReference type="PANTHER" id="PTHR36488">
    <property type="entry name" value="CASP-LIKE PROTEIN 1U1"/>
    <property type="match status" value="1"/>
</dbReference>
<dbReference type="PANTHER" id="PTHR36488:SF8">
    <property type="entry name" value="CASP-LIKE PROTEIN 1U1"/>
    <property type="match status" value="1"/>
</dbReference>
<dbReference type="Pfam" id="PF04535">
    <property type="entry name" value="CASP_dom"/>
    <property type="match status" value="1"/>
</dbReference>
<accession>B9HMP6</accession>